<reference key="1">
    <citation type="journal article" date="2005" name="Genome Res.">
        <title>Complete genome sequence of the hyperthermophilic archaeon Thermococcus kodakaraensis KOD1 and comparison with Pyrococcus genomes.</title>
        <authorList>
            <person name="Fukui T."/>
            <person name="Atomi H."/>
            <person name="Kanai T."/>
            <person name="Matsumi R."/>
            <person name="Fujiwara S."/>
            <person name="Imanaka T."/>
        </authorList>
    </citation>
    <scope>NUCLEOTIDE SEQUENCE [LARGE SCALE GENOMIC DNA]</scope>
    <source>
        <strain>ATCC BAA-918 / JCM 12380 / KOD1</strain>
    </source>
</reference>
<reference evidence="4 5 6" key="2">
    <citation type="journal article" date="2020" name="Nature">
        <title>Dynamic RNA acetylation revealed by quantitative cross-evolutionary mapping.</title>
        <authorList>
            <person name="Sas-Chen A."/>
            <person name="Thomas J.M."/>
            <person name="Matzov D."/>
            <person name="Taoka M."/>
            <person name="Nance K.D."/>
            <person name="Nir R."/>
            <person name="Bryson K.M."/>
            <person name="Shachar R."/>
            <person name="Liman G.L.S."/>
            <person name="Burkhart B.W."/>
            <person name="Gamage S.T."/>
            <person name="Nobe Y."/>
            <person name="Briney C.A."/>
            <person name="Levy M.J."/>
            <person name="Fuchs R.T."/>
            <person name="Robb G.B."/>
            <person name="Hartmann J."/>
            <person name="Sharma S."/>
            <person name="Lin Q."/>
            <person name="Florens L."/>
            <person name="Washburn M.P."/>
            <person name="Isobe T."/>
            <person name="Santangelo T.J."/>
            <person name="Shalev-Benami M."/>
            <person name="Meier J.L."/>
            <person name="Schwartz S."/>
        </authorList>
    </citation>
    <scope>STRUCTURE BY ELECTRON MICROSCOPY (2.55 ANGSTROMS) IN 70S RIBOSOME</scope>
    <scope>SUBUNIT</scope>
    <source>
        <strain>ATCC BAA-918 / TS559</strain>
    </source>
</reference>
<protein>
    <recommendedName>
        <fullName evidence="1">Small ribosomal subunit protein uS7</fullName>
    </recommendedName>
    <alternativeName>
        <fullName evidence="3">30S ribosomal protein S7</fullName>
    </alternativeName>
</protein>
<organism>
    <name type="scientific">Thermococcus kodakarensis (strain ATCC BAA-918 / JCM 12380 / KOD1)</name>
    <name type="common">Pyrococcus kodakaraensis (strain KOD1)</name>
    <dbReference type="NCBI Taxonomy" id="69014"/>
    <lineage>
        <taxon>Archaea</taxon>
        <taxon>Methanobacteriati</taxon>
        <taxon>Methanobacteriota</taxon>
        <taxon>Thermococci</taxon>
        <taxon>Thermococcales</taxon>
        <taxon>Thermococcaceae</taxon>
        <taxon>Thermococcus</taxon>
    </lineage>
</organism>
<feature type="chain" id="PRO_0000124411" description="Small ribosomal subunit protein uS7">
    <location>
        <begin position="1"/>
        <end position="215"/>
    </location>
</feature>
<gene>
    <name evidence="1" type="primary">rps7</name>
    <name type="ordered locus">TK1077</name>
</gene>
<comment type="function">
    <text evidence="1">One of the primary rRNA binding proteins, it binds directly to 16S rRNA where it nucleates assembly of the head domain of the 30S subunit. Is located at the subunit interface close to the decoding center.</text>
</comment>
<comment type="subunit">
    <text evidence="1 2">Part of the 30S ribosomal subunit.</text>
</comment>
<comment type="similarity">
    <text evidence="1">Belongs to the universal ribosomal protein uS7 family.</text>
</comment>
<name>RS7_THEKO</name>
<keyword id="KW-0002">3D-structure</keyword>
<keyword id="KW-1185">Reference proteome</keyword>
<keyword id="KW-0687">Ribonucleoprotein</keyword>
<keyword id="KW-0689">Ribosomal protein</keyword>
<keyword id="KW-0694">RNA-binding</keyword>
<keyword id="KW-0699">rRNA-binding</keyword>
<dbReference type="EMBL" id="AP006878">
    <property type="protein sequence ID" value="BAD85266.1"/>
    <property type="molecule type" value="Genomic_DNA"/>
</dbReference>
<dbReference type="RefSeq" id="WP_011250028.1">
    <property type="nucleotide sequence ID" value="NC_006624.1"/>
</dbReference>
<dbReference type="PDB" id="6SKF">
    <property type="method" value="EM"/>
    <property type="resolution" value="2.95 A"/>
    <property type="chains" value="Ai=1-215"/>
</dbReference>
<dbReference type="PDB" id="6SKG">
    <property type="method" value="EM"/>
    <property type="resolution" value="2.65 A"/>
    <property type="chains" value="Ai=1-215"/>
</dbReference>
<dbReference type="PDB" id="6TH6">
    <property type="method" value="EM"/>
    <property type="resolution" value="2.55 A"/>
    <property type="chains" value="Ai=1-215"/>
</dbReference>
<dbReference type="PDBsum" id="6SKF"/>
<dbReference type="PDBsum" id="6SKG"/>
<dbReference type="PDBsum" id="6TH6"/>
<dbReference type="EMDB" id="EMD-10223"/>
<dbReference type="EMDB" id="EMD-10224"/>
<dbReference type="EMDB" id="EMD-10503"/>
<dbReference type="SMR" id="Q5JE04"/>
<dbReference type="FunCoup" id="Q5JE04">
    <property type="interactions" value="167"/>
</dbReference>
<dbReference type="STRING" id="69014.TK1077"/>
<dbReference type="EnsemblBacteria" id="BAD85266">
    <property type="protein sequence ID" value="BAD85266"/>
    <property type="gene ID" value="TK1077"/>
</dbReference>
<dbReference type="GeneID" id="78447590"/>
<dbReference type="KEGG" id="tko:TK1077"/>
<dbReference type="PATRIC" id="fig|69014.16.peg.1053"/>
<dbReference type="eggNOG" id="arCOG04254">
    <property type="taxonomic scope" value="Archaea"/>
</dbReference>
<dbReference type="HOGENOM" id="CLU_063975_0_0_2"/>
<dbReference type="InParanoid" id="Q5JE04"/>
<dbReference type="OrthoDB" id="45346at2157"/>
<dbReference type="PhylomeDB" id="Q5JE04"/>
<dbReference type="Proteomes" id="UP000000536">
    <property type="component" value="Chromosome"/>
</dbReference>
<dbReference type="GO" id="GO:0022627">
    <property type="term" value="C:cytosolic small ribosomal subunit"/>
    <property type="evidence" value="ECO:0000318"/>
    <property type="project" value="GO_Central"/>
</dbReference>
<dbReference type="GO" id="GO:0005840">
    <property type="term" value="C:ribosome"/>
    <property type="evidence" value="ECO:0000318"/>
    <property type="project" value="GO_Central"/>
</dbReference>
<dbReference type="GO" id="GO:0003729">
    <property type="term" value="F:mRNA binding"/>
    <property type="evidence" value="ECO:0000318"/>
    <property type="project" value="GO_Central"/>
</dbReference>
<dbReference type="GO" id="GO:0019843">
    <property type="term" value="F:rRNA binding"/>
    <property type="evidence" value="ECO:0000318"/>
    <property type="project" value="GO_Central"/>
</dbReference>
<dbReference type="GO" id="GO:0003735">
    <property type="term" value="F:structural constituent of ribosome"/>
    <property type="evidence" value="ECO:0000318"/>
    <property type="project" value="GO_Central"/>
</dbReference>
<dbReference type="GO" id="GO:0000028">
    <property type="term" value="P:ribosomal small subunit assembly"/>
    <property type="evidence" value="ECO:0000318"/>
    <property type="project" value="GO_Central"/>
</dbReference>
<dbReference type="GO" id="GO:0006412">
    <property type="term" value="P:translation"/>
    <property type="evidence" value="ECO:0000318"/>
    <property type="project" value="GO_Central"/>
</dbReference>
<dbReference type="FunFam" id="1.10.455.10:FF:000032">
    <property type="entry name" value="30S ribosomal protein S7"/>
    <property type="match status" value="1"/>
</dbReference>
<dbReference type="Gene3D" id="1.10.455.10">
    <property type="entry name" value="Ribosomal protein S7 domain"/>
    <property type="match status" value="1"/>
</dbReference>
<dbReference type="HAMAP" id="MF_00480_A">
    <property type="entry name" value="Ribosomal_uS7_A"/>
    <property type="match status" value="1"/>
</dbReference>
<dbReference type="InterPro" id="IPR000235">
    <property type="entry name" value="Ribosomal_uS7"/>
</dbReference>
<dbReference type="InterPro" id="IPR026018">
    <property type="entry name" value="Ribosomal_uS7_arc"/>
</dbReference>
<dbReference type="InterPro" id="IPR023798">
    <property type="entry name" value="Ribosomal_uS7_dom"/>
</dbReference>
<dbReference type="InterPro" id="IPR036823">
    <property type="entry name" value="Ribosomal_uS7_dom_sf"/>
</dbReference>
<dbReference type="InterPro" id="IPR005716">
    <property type="entry name" value="Ribosomal_uS7_euk/arc"/>
</dbReference>
<dbReference type="NCBIfam" id="NF003106">
    <property type="entry name" value="PRK04027.1"/>
    <property type="match status" value="1"/>
</dbReference>
<dbReference type="NCBIfam" id="TIGR01028">
    <property type="entry name" value="uS7_euk_arch"/>
    <property type="match status" value="1"/>
</dbReference>
<dbReference type="PANTHER" id="PTHR11205">
    <property type="entry name" value="RIBOSOMAL PROTEIN S7"/>
    <property type="match status" value="1"/>
</dbReference>
<dbReference type="Pfam" id="PF00177">
    <property type="entry name" value="Ribosomal_S7"/>
    <property type="match status" value="1"/>
</dbReference>
<dbReference type="PIRSF" id="PIRSF002122">
    <property type="entry name" value="RPS7p_RPS7a_RPS5e_RPS7o"/>
    <property type="match status" value="1"/>
</dbReference>
<dbReference type="SUPFAM" id="SSF47973">
    <property type="entry name" value="Ribosomal protein S7"/>
    <property type="match status" value="1"/>
</dbReference>
<evidence type="ECO:0000255" key="1">
    <source>
        <dbReference type="HAMAP-Rule" id="MF_00480"/>
    </source>
</evidence>
<evidence type="ECO:0000269" key="2">
    <source>
    </source>
</evidence>
<evidence type="ECO:0000305" key="3"/>
<evidence type="ECO:0007744" key="4">
    <source>
        <dbReference type="PDB" id="6SKF"/>
    </source>
</evidence>
<evidence type="ECO:0007744" key="5">
    <source>
        <dbReference type="PDB" id="6SKG"/>
    </source>
</evidence>
<evidence type="ECO:0007744" key="6">
    <source>
        <dbReference type="PDB" id="6TH6"/>
    </source>
</evidence>
<accession>Q5JE04</accession>
<sequence>MAKPLTERFFIPKEVKVMGRWSVEDVTVEDPSLKPYINLDARILPHSHGRYAKKPFGKANVHIVERLINKVMRSGASHYKAGGHFMRREHRSIMSKKMKAYEVVKEAFMIIERRTKQNPIQVLVKAIENSAPREDTTTIAFGGIRYHMSVDVSPLRRLDIALKNIALGASIKCYRNKTTYAQALAEEIIAAANKDPKSFAYSKKEEIERIAQSSR</sequence>
<proteinExistence type="evidence at protein level"/>